<feature type="chain" id="PRO_0000180933" description="Flagellar protein FliZ">
    <location>
        <begin position="1"/>
        <end position="208"/>
    </location>
</feature>
<feature type="sequence conflict" description="In Ref. 2; AAB58967." evidence="1" ref="2">
    <original>Q</original>
    <variation>R</variation>
    <location>
        <position position="202"/>
    </location>
</feature>
<comment type="function">
    <text>Required for flagella formation.</text>
</comment>
<gene>
    <name type="primary">fliZ</name>
    <name type="ordered locus">BB_0276</name>
</gene>
<protein>
    <recommendedName>
        <fullName>Flagellar protein FliZ</fullName>
    </recommendedName>
</protein>
<keyword id="KW-1005">Bacterial flagellum biogenesis</keyword>
<keyword id="KW-1185">Reference proteome</keyword>
<accession>Q44904</accession>
<accession>Q44764</accession>
<proteinExistence type="predicted"/>
<reference key="1">
    <citation type="submission" date="1995-12" db="EMBL/GenBank/DDBJ databases">
        <authorList>
            <person name="Dunn J.J."/>
            <person name="Butler-Loffredo L."/>
            <person name="Kieleczawa J."/>
            <person name="Medalle J."/>
            <person name="Luft B.J."/>
        </authorList>
    </citation>
    <scope>NUCLEOTIDE SEQUENCE [GENOMIC DNA]</scope>
    <source>
        <strain>ATCC 35210 / DSM 4680 / CIP 102532 / B31</strain>
    </source>
</reference>
<reference key="2">
    <citation type="submission" date="1996-02" db="EMBL/GenBank/DDBJ databases">
        <authorList>
            <person name="Ge Y."/>
            <person name="Charon N.W."/>
        </authorList>
    </citation>
    <scope>NUCLEOTIDE SEQUENCE [GENOMIC DNA]</scope>
    <source>
        <strain>212</strain>
    </source>
</reference>
<reference key="3">
    <citation type="journal article" date="1997" name="Nature">
        <title>Genomic sequence of a Lyme disease spirochaete, Borrelia burgdorferi.</title>
        <authorList>
            <person name="Fraser C.M."/>
            <person name="Casjens S."/>
            <person name="Huang W.M."/>
            <person name="Sutton G.G."/>
            <person name="Clayton R.A."/>
            <person name="Lathigra R."/>
            <person name="White O."/>
            <person name="Ketchum K.A."/>
            <person name="Dodson R.J."/>
            <person name="Hickey E.K."/>
            <person name="Gwinn M.L."/>
            <person name="Dougherty B.A."/>
            <person name="Tomb J.-F."/>
            <person name="Fleischmann R.D."/>
            <person name="Richardson D.L."/>
            <person name="Peterson J.D."/>
            <person name="Kerlavage A.R."/>
            <person name="Quackenbush J."/>
            <person name="Salzberg S.L."/>
            <person name="Hanson M."/>
            <person name="van Vugt R."/>
            <person name="Palmer N."/>
            <person name="Adams M.D."/>
            <person name="Gocayne J.D."/>
            <person name="Weidman J.F."/>
            <person name="Utterback T.R."/>
            <person name="Watthey L."/>
            <person name="McDonald L.A."/>
            <person name="Artiach P."/>
            <person name="Bowman C."/>
            <person name="Garland S.A."/>
            <person name="Fujii C."/>
            <person name="Cotton M.D."/>
            <person name="Horst K."/>
            <person name="Roberts K.M."/>
            <person name="Hatch B."/>
            <person name="Smith H.O."/>
            <person name="Venter J.C."/>
        </authorList>
    </citation>
    <scope>NUCLEOTIDE SEQUENCE [LARGE SCALE GENOMIC DNA]</scope>
    <source>
        <strain>ATCC 35210 / DSM 4680 / CIP 102532 / B31</strain>
    </source>
</reference>
<name>FLIZ_BORBU</name>
<sequence>MNNKFLFLVFLSFFNFFTYANSQEQVNSASTDLENESSLPIFEEDKANFVNNDSTQPVSIFNISDLLKIVLFLLIAFFIFFLLKKLIFYSKKSKYEQNSNLIKELVFYEIDVKNSIRIINILDNVYIFLVSSNSFTLLKEIKSEEELEDLKLRLSKINDSAKKDSFQSIFKKMLLKKEEIPSSGNDYVKLEEKIEASLKDKQDRLKKF</sequence>
<organism>
    <name type="scientific">Borreliella burgdorferi (strain ATCC 35210 / DSM 4680 / CIP 102532 / B31)</name>
    <name type="common">Borrelia burgdorferi</name>
    <dbReference type="NCBI Taxonomy" id="224326"/>
    <lineage>
        <taxon>Bacteria</taxon>
        <taxon>Pseudomonadati</taxon>
        <taxon>Spirochaetota</taxon>
        <taxon>Spirochaetia</taxon>
        <taxon>Spirochaetales</taxon>
        <taxon>Borreliaceae</taxon>
        <taxon>Borreliella</taxon>
    </lineage>
</organism>
<evidence type="ECO:0000305" key="1"/>
<dbReference type="EMBL" id="U43739">
    <property type="protein sequence ID" value="AAA85600.1"/>
    <property type="molecule type" value="Genomic_DNA"/>
</dbReference>
<dbReference type="EMBL" id="L75945">
    <property type="protein sequence ID" value="AAB58967.1"/>
    <property type="molecule type" value="Genomic_DNA"/>
</dbReference>
<dbReference type="EMBL" id="AE000783">
    <property type="protein sequence ID" value="AAC66672.1"/>
    <property type="molecule type" value="Genomic_DNA"/>
</dbReference>
<dbReference type="PIR" id="D70134">
    <property type="entry name" value="D70134"/>
</dbReference>
<dbReference type="RefSeq" id="NP_212410.1">
    <property type="nucleotide sequence ID" value="NC_001318.1"/>
</dbReference>
<dbReference type="RefSeq" id="WP_002665214.1">
    <property type="nucleotide sequence ID" value="NC_001318.1"/>
</dbReference>
<dbReference type="SMR" id="Q44904"/>
<dbReference type="STRING" id="224326.BB_0276"/>
<dbReference type="PaxDb" id="224326-BB_0276"/>
<dbReference type="EnsemblBacteria" id="AAC66672">
    <property type="protein sequence ID" value="AAC66672"/>
    <property type="gene ID" value="BB_0276"/>
</dbReference>
<dbReference type="KEGG" id="bbu:BB_0276"/>
<dbReference type="PATRIC" id="fig|224326.49.peg.675"/>
<dbReference type="HOGENOM" id="CLU_1318844_0_0_12"/>
<dbReference type="OrthoDB" id="350659at2"/>
<dbReference type="Proteomes" id="UP000001807">
    <property type="component" value="Chromosome"/>
</dbReference>
<dbReference type="GO" id="GO:0016020">
    <property type="term" value="C:membrane"/>
    <property type="evidence" value="ECO:0007669"/>
    <property type="project" value="InterPro"/>
</dbReference>
<dbReference type="GO" id="GO:0044781">
    <property type="term" value="P:bacterial-type flagellum organization"/>
    <property type="evidence" value="ECO:0007669"/>
    <property type="project" value="UniProtKB-KW"/>
</dbReference>
<dbReference type="InterPro" id="IPR022781">
    <property type="entry name" value="Flagellar_biosynth_FliO"/>
</dbReference>
<dbReference type="NCBIfam" id="NF009950">
    <property type="entry name" value="PRK13414.1"/>
    <property type="match status" value="1"/>
</dbReference>
<dbReference type="Pfam" id="PF04347">
    <property type="entry name" value="FliO"/>
    <property type="match status" value="1"/>
</dbReference>